<sequence length="101" mass="11512">MANVTVTFTITEFCLHTGISEEELNEIVGLGVVEPREIQETTWVFDDHAAIVVQRAVRLRHELALDWPGIAVALTLMDDIAHLKQENRLLRQRLSRFVAHP</sequence>
<gene>
    <name evidence="1" type="primary">cbpM</name>
    <name type="ordered locus">EC55989_1109</name>
</gene>
<comment type="function">
    <text evidence="1">Interacts with CbpA and inhibits both the DnaJ-like co-chaperone activity and the DNA binding activity of CbpA. Together with CbpA, modulates the activity of the DnaK chaperone system. Does not inhibit the co-chaperone activity of DnaJ.</text>
</comment>
<comment type="similarity">
    <text evidence="1">Belongs to the CbpM family.</text>
</comment>
<dbReference type="EMBL" id="CU928145">
    <property type="protein sequence ID" value="CAU96970.1"/>
    <property type="molecule type" value="Genomic_DNA"/>
</dbReference>
<dbReference type="RefSeq" id="WP_000024560.1">
    <property type="nucleotide sequence ID" value="NC_011748.1"/>
</dbReference>
<dbReference type="SMR" id="B7LFA8"/>
<dbReference type="GeneID" id="93776412"/>
<dbReference type="KEGG" id="eck:EC55989_1109"/>
<dbReference type="HOGENOM" id="CLU_144710_3_1_6"/>
<dbReference type="Proteomes" id="UP000000746">
    <property type="component" value="Chromosome"/>
</dbReference>
<dbReference type="FunFam" id="1.10.1660.10:FF:000006">
    <property type="entry name" value="Chaperone modulatory protein CbpM"/>
    <property type="match status" value="1"/>
</dbReference>
<dbReference type="Gene3D" id="1.10.1660.10">
    <property type="match status" value="1"/>
</dbReference>
<dbReference type="HAMAP" id="MF_01155">
    <property type="entry name" value="CbpM"/>
    <property type="match status" value="1"/>
</dbReference>
<dbReference type="InterPro" id="IPR022835">
    <property type="entry name" value="CbpM"/>
</dbReference>
<dbReference type="NCBIfam" id="NF007617">
    <property type="entry name" value="PRK10265.1"/>
    <property type="match status" value="1"/>
</dbReference>
<dbReference type="Pfam" id="PF13591">
    <property type="entry name" value="MerR_2"/>
    <property type="match status" value="1"/>
</dbReference>
<keyword id="KW-1185">Reference proteome</keyword>
<evidence type="ECO:0000255" key="1">
    <source>
        <dbReference type="HAMAP-Rule" id="MF_01155"/>
    </source>
</evidence>
<reference key="1">
    <citation type="journal article" date="2009" name="PLoS Genet.">
        <title>Organised genome dynamics in the Escherichia coli species results in highly diverse adaptive paths.</title>
        <authorList>
            <person name="Touchon M."/>
            <person name="Hoede C."/>
            <person name="Tenaillon O."/>
            <person name="Barbe V."/>
            <person name="Baeriswyl S."/>
            <person name="Bidet P."/>
            <person name="Bingen E."/>
            <person name="Bonacorsi S."/>
            <person name="Bouchier C."/>
            <person name="Bouvet O."/>
            <person name="Calteau A."/>
            <person name="Chiapello H."/>
            <person name="Clermont O."/>
            <person name="Cruveiller S."/>
            <person name="Danchin A."/>
            <person name="Diard M."/>
            <person name="Dossat C."/>
            <person name="Karoui M.E."/>
            <person name="Frapy E."/>
            <person name="Garry L."/>
            <person name="Ghigo J.M."/>
            <person name="Gilles A.M."/>
            <person name="Johnson J."/>
            <person name="Le Bouguenec C."/>
            <person name="Lescat M."/>
            <person name="Mangenot S."/>
            <person name="Martinez-Jehanne V."/>
            <person name="Matic I."/>
            <person name="Nassif X."/>
            <person name="Oztas S."/>
            <person name="Petit M.A."/>
            <person name="Pichon C."/>
            <person name="Rouy Z."/>
            <person name="Ruf C.S."/>
            <person name="Schneider D."/>
            <person name="Tourret J."/>
            <person name="Vacherie B."/>
            <person name="Vallenet D."/>
            <person name="Medigue C."/>
            <person name="Rocha E.P.C."/>
            <person name="Denamur E."/>
        </authorList>
    </citation>
    <scope>NUCLEOTIDE SEQUENCE [LARGE SCALE GENOMIC DNA]</scope>
    <source>
        <strain>55989 / EAEC</strain>
    </source>
</reference>
<feature type="chain" id="PRO_1000164290" description="Chaperone modulatory protein CbpM">
    <location>
        <begin position="1"/>
        <end position="101"/>
    </location>
</feature>
<name>CBPM_ECO55</name>
<organism>
    <name type="scientific">Escherichia coli (strain 55989 / EAEC)</name>
    <dbReference type="NCBI Taxonomy" id="585055"/>
    <lineage>
        <taxon>Bacteria</taxon>
        <taxon>Pseudomonadati</taxon>
        <taxon>Pseudomonadota</taxon>
        <taxon>Gammaproteobacteria</taxon>
        <taxon>Enterobacterales</taxon>
        <taxon>Enterobacteriaceae</taxon>
        <taxon>Escherichia</taxon>
    </lineage>
</organism>
<accession>B7LFA8</accession>
<protein>
    <recommendedName>
        <fullName evidence="1">Chaperone modulatory protein CbpM</fullName>
    </recommendedName>
</protein>
<proteinExistence type="inferred from homology"/>